<accession>Q9VXY7</accession>
<comment type="function">
    <text evidence="5 6">Essential for embryogenesis. Required for normal deposition of neutral lipids in the oocyte.</text>
</comment>
<comment type="subcellular location">
    <subcellularLocation>
        <location evidence="3 5 6">Cytoplasm</location>
    </subcellularLocation>
    <subcellularLocation>
        <location evidence="3 5 6">Lipid droplet</location>
    </subcellularLocation>
    <text evidence="6">Cytoplasm and on surface of neutral lipid storage droplets in oocytes. Colocalizes with Lsd-1 to the droplet surface in cells of fat bodies.</text>
</comment>
<comment type="tissue specificity">
    <text evidence="5 6">Ubiquitous expression in early embryos. At stage 5 expression is restricted to the pole cells. At stage 11 expression is seen in the amnioserosa, refined to the fat body and midgut by stage 14. Also seen in the hindgut by the end of embryogenesis. Expression is seen in larval fat body (at protein level).</text>
</comment>
<comment type="developmental stage">
    <text evidence="5 6">Expressed both maternally and zygotically. Expressed throughout development with highest zygotic expression in third instar larva and pupae.</text>
</comment>
<comment type="similarity">
    <text evidence="7">Belongs to the perilipin family.</text>
</comment>
<keyword id="KW-0963">Cytoplasm</keyword>
<keyword id="KW-0217">Developmental protein</keyword>
<keyword id="KW-0551">Lipid droplet</keyword>
<keyword id="KW-0445">Lipid transport</keyword>
<keyword id="KW-1185">Reference proteome</keyword>
<keyword id="KW-0813">Transport</keyword>
<proteinExistence type="evidence at protein level"/>
<evidence type="ECO:0000256" key="1">
    <source>
        <dbReference type="SAM" id="MobiDB-lite"/>
    </source>
</evidence>
<evidence type="ECO:0000269" key="2">
    <source>
    </source>
</evidence>
<evidence type="ECO:0000269" key="3">
    <source>
    </source>
</evidence>
<evidence type="ECO:0000269" key="4">
    <source>
    </source>
</evidence>
<evidence type="ECO:0000269" key="5">
    <source>
    </source>
</evidence>
<evidence type="ECO:0000269" key="6">
    <source>
    </source>
</evidence>
<evidence type="ECO:0000305" key="7"/>
<evidence type="ECO:0000312" key="8">
    <source>
        <dbReference type="EMBL" id="AAF48419.1"/>
    </source>
</evidence>
<evidence type="ECO:0000312" key="9">
    <source>
        <dbReference type="EMBL" id="AAL25281.1"/>
    </source>
</evidence>
<dbReference type="EMBL" id="AE014298">
    <property type="protein sequence ID" value="AAF48419.1"/>
    <property type="molecule type" value="Genomic_DNA"/>
</dbReference>
<dbReference type="EMBL" id="AY060242">
    <property type="protein sequence ID" value="AAL25281.1"/>
    <property type="molecule type" value="mRNA"/>
</dbReference>
<dbReference type="RefSeq" id="NP_572996.1">
    <property type="nucleotide sequence ID" value="NM_132768.3"/>
</dbReference>
<dbReference type="SMR" id="Q9VXY7"/>
<dbReference type="BioGRID" id="58792">
    <property type="interactions" value="14"/>
</dbReference>
<dbReference type="FunCoup" id="Q9VXY7">
    <property type="interactions" value="59"/>
</dbReference>
<dbReference type="IntAct" id="Q9VXY7">
    <property type="interactions" value="187"/>
</dbReference>
<dbReference type="STRING" id="7227.FBpp0073784"/>
<dbReference type="GlyGen" id="Q9VXY7">
    <property type="glycosylation" value="1 site"/>
</dbReference>
<dbReference type="DNASU" id="32437"/>
<dbReference type="EnsemblMetazoa" id="FBtr0073967">
    <property type="protein sequence ID" value="FBpp0073784"/>
    <property type="gene ID" value="FBgn0030608"/>
</dbReference>
<dbReference type="GeneID" id="32437"/>
<dbReference type="KEGG" id="dme:Dmel_CG9057"/>
<dbReference type="AGR" id="FB:FBgn0030608"/>
<dbReference type="CTD" id="32437"/>
<dbReference type="FlyBase" id="FBgn0030608">
    <property type="gene designation" value="Lsd-2"/>
</dbReference>
<dbReference type="VEuPathDB" id="VectorBase:FBgn0030608"/>
<dbReference type="GeneTree" id="ENSGT00950000182920"/>
<dbReference type="HOGENOM" id="CLU_064803_1_0_1"/>
<dbReference type="InParanoid" id="Q9VXY7"/>
<dbReference type="OMA" id="TCSPFGT"/>
<dbReference type="OrthoDB" id="376826at2759"/>
<dbReference type="Reactome" id="R-DME-6811440">
    <property type="pathway name" value="Retrograde transport at the Trans-Golgi-Network"/>
</dbReference>
<dbReference type="Reactome" id="R-DME-9706019">
    <property type="pathway name" value="RHOBTB3 ATPase cycle"/>
</dbReference>
<dbReference type="BioGRID-ORCS" id="32437">
    <property type="hits" value="0 hits in 3 CRISPR screens"/>
</dbReference>
<dbReference type="ChiTaRS" id="Lsd-2">
    <property type="organism name" value="fly"/>
</dbReference>
<dbReference type="GenomeRNAi" id="32437"/>
<dbReference type="PRO" id="PR:Q9VXY7"/>
<dbReference type="Proteomes" id="UP000000803">
    <property type="component" value="Chromosome X"/>
</dbReference>
<dbReference type="Bgee" id="FBgn0030608">
    <property type="expression patterns" value="Expressed in crystal cell in dorsal vessel heart and 241 other cell types or tissues"/>
</dbReference>
<dbReference type="ExpressionAtlas" id="Q9VXY7">
    <property type="expression patterns" value="baseline and differential"/>
</dbReference>
<dbReference type="GO" id="GO:0005829">
    <property type="term" value="C:cytosol"/>
    <property type="evidence" value="ECO:0000314"/>
    <property type="project" value="FlyBase"/>
</dbReference>
<dbReference type="GO" id="GO:0005811">
    <property type="term" value="C:lipid droplet"/>
    <property type="evidence" value="ECO:0000314"/>
    <property type="project" value="UniProtKB"/>
</dbReference>
<dbReference type="GO" id="GO:0140042">
    <property type="term" value="P:lipid droplet formation"/>
    <property type="evidence" value="ECO:0000316"/>
    <property type="project" value="FlyBase"/>
</dbReference>
<dbReference type="GO" id="GO:0034389">
    <property type="term" value="P:lipid droplet organization"/>
    <property type="evidence" value="ECO:0000315"/>
    <property type="project" value="UniProtKB"/>
</dbReference>
<dbReference type="GO" id="GO:0031887">
    <property type="term" value="P:lipid droplet transport along microtubule"/>
    <property type="evidence" value="ECO:0000315"/>
    <property type="project" value="FlyBase"/>
</dbReference>
<dbReference type="GO" id="GO:0019915">
    <property type="term" value="P:lipid storage"/>
    <property type="evidence" value="ECO:0000315"/>
    <property type="project" value="FlyBase"/>
</dbReference>
<dbReference type="GO" id="GO:0006869">
    <property type="term" value="P:lipid transport"/>
    <property type="evidence" value="ECO:0000270"/>
    <property type="project" value="UniProtKB"/>
</dbReference>
<dbReference type="GO" id="GO:0050995">
    <property type="term" value="P:negative regulation of lipid catabolic process"/>
    <property type="evidence" value="ECO:0000315"/>
    <property type="project" value="FlyBase"/>
</dbReference>
<dbReference type="GO" id="GO:0010890">
    <property type="term" value="P:positive regulation of triglyceride storage"/>
    <property type="evidence" value="ECO:0000316"/>
    <property type="project" value="FlyBase"/>
</dbReference>
<dbReference type="GO" id="GO:0051049">
    <property type="term" value="P:regulation of transport"/>
    <property type="evidence" value="ECO:0000315"/>
    <property type="project" value="FlyBase"/>
</dbReference>
<dbReference type="GO" id="GO:0030730">
    <property type="term" value="P:triglyceride storage"/>
    <property type="evidence" value="ECO:0000315"/>
    <property type="project" value="FlyBase"/>
</dbReference>
<dbReference type="InterPro" id="IPR004279">
    <property type="entry name" value="Perilipin"/>
</dbReference>
<dbReference type="PANTHER" id="PTHR14024:SF53">
    <property type="entry name" value="LIPID STORAGE DROPLETS SURFACE-BINDING PROTEIN 2"/>
    <property type="match status" value="1"/>
</dbReference>
<dbReference type="PANTHER" id="PTHR14024">
    <property type="entry name" value="PERILIPIN"/>
    <property type="match status" value="1"/>
</dbReference>
<dbReference type="Pfam" id="PF03036">
    <property type="entry name" value="Perilipin"/>
    <property type="match status" value="1"/>
</dbReference>
<dbReference type="PIRSF" id="PIRSF036881">
    <property type="entry name" value="PAT"/>
    <property type="match status" value="1"/>
</dbReference>
<name>LSD2_DROME</name>
<organism>
    <name type="scientific">Drosophila melanogaster</name>
    <name type="common">Fruit fly</name>
    <dbReference type="NCBI Taxonomy" id="7227"/>
    <lineage>
        <taxon>Eukaryota</taxon>
        <taxon>Metazoa</taxon>
        <taxon>Ecdysozoa</taxon>
        <taxon>Arthropoda</taxon>
        <taxon>Hexapoda</taxon>
        <taxon>Insecta</taxon>
        <taxon>Pterygota</taxon>
        <taxon>Neoptera</taxon>
        <taxon>Endopterygota</taxon>
        <taxon>Diptera</taxon>
        <taxon>Brachycera</taxon>
        <taxon>Muscomorpha</taxon>
        <taxon>Ephydroidea</taxon>
        <taxon>Drosophilidae</taxon>
        <taxon>Drosophila</taxon>
        <taxon>Sophophora</taxon>
    </lineage>
</organism>
<reference evidence="8" key="1">
    <citation type="journal article" date="2000" name="Science">
        <title>The genome sequence of Drosophila melanogaster.</title>
        <authorList>
            <person name="Adams M.D."/>
            <person name="Celniker S.E."/>
            <person name="Holt R.A."/>
            <person name="Evans C.A."/>
            <person name="Gocayne J.D."/>
            <person name="Amanatides P.G."/>
            <person name="Scherer S.E."/>
            <person name="Li P.W."/>
            <person name="Hoskins R.A."/>
            <person name="Galle R.F."/>
            <person name="George R.A."/>
            <person name="Lewis S.E."/>
            <person name="Richards S."/>
            <person name="Ashburner M."/>
            <person name="Henderson S.N."/>
            <person name="Sutton G.G."/>
            <person name="Wortman J.R."/>
            <person name="Yandell M.D."/>
            <person name="Zhang Q."/>
            <person name="Chen L.X."/>
            <person name="Brandon R.C."/>
            <person name="Rogers Y.-H.C."/>
            <person name="Blazej R.G."/>
            <person name="Champe M."/>
            <person name="Pfeiffer B.D."/>
            <person name="Wan K.H."/>
            <person name="Doyle C."/>
            <person name="Baxter E.G."/>
            <person name="Helt G."/>
            <person name="Nelson C.R."/>
            <person name="Miklos G.L.G."/>
            <person name="Abril J.F."/>
            <person name="Agbayani A."/>
            <person name="An H.-J."/>
            <person name="Andrews-Pfannkoch C."/>
            <person name="Baldwin D."/>
            <person name="Ballew R.M."/>
            <person name="Basu A."/>
            <person name="Baxendale J."/>
            <person name="Bayraktaroglu L."/>
            <person name="Beasley E.M."/>
            <person name="Beeson K.Y."/>
            <person name="Benos P.V."/>
            <person name="Berman B.P."/>
            <person name="Bhandari D."/>
            <person name="Bolshakov S."/>
            <person name="Borkova D."/>
            <person name="Botchan M.R."/>
            <person name="Bouck J."/>
            <person name="Brokstein P."/>
            <person name="Brottier P."/>
            <person name="Burtis K.C."/>
            <person name="Busam D.A."/>
            <person name="Butler H."/>
            <person name="Cadieu E."/>
            <person name="Center A."/>
            <person name="Chandra I."/>
            <person name="Cherry J.M."/>
            <person name="Cawley S."/>
            <person name="Dahlke C."/>
            <person name="Davenport L.B."/>
            <person name="Davies P."/>
            <person name="de Pablos B."/>
            <person name="Delcher A."/>
            <person name="Deng Z."/>
            <person name="Mays A.D."/>
            <person name="Dew I."/>
            <person name="Dietz S.M."/>
            <person name="Dodson K."/>
            <person name="Doup L.E."/>
            <person name="Downes M."/>
            <person name="Dugan-Rocha S."/>
            <person name="Dunkov B.C."/>
            <person name="Dunn P."/>
            <person name="Durbin K.J."/>
            <person name="Evangelista C.C."/>
            <person name="Ferraz C."/>
            <person name="Ferriera S."/>
            <person name="Fleischmann W."/>
            <person name="Fosler C."/>
            <person name="Gabrielian A.E."/>
            <person name="Garg N.S."/>
            <person name="Gelbart W.M."/>
            <person name="Glasser K."/>
            <person name="Glodek A."/>
            <person name="Gong F."/>
            <person name="Gorrell J.H."/>
            <person name="Gu Z."/>
            <person name="Guan P."/>
            <person name="Harris M."/>
            <person name="Harris N.L."/>
            <person name="Harvey D.A."/>
            <person name="Heiman T.J."/>
            <person name="Hernandez J.R."/>
            <person name="Houck J."/>
            <person name="Hostin D."/>
            <person name="Houston K.A."/>
            <person name="Howland T.J."/>
            <person name="Wei M.-H."/>
            <person name="Ibegwam C."/>
            <person name="Jalali M."/>
            <person name="Kalush F."/>
            <person name="Karpen G.H."/>
            <person name="Ke Z."/>
            <person name="Kennison J.A."/>
            <person name="Ketchum K.A."/>
            <person name="Kimmel B.E."/>
            <person name="Kodira C.D."/>
            <person name="Kraft C.L."/>
            <person name="Kravitz S."/>
            <person name="Kulp D."/>
            <person name="Lai Z."/>
            <person name="Lasko P."/>
            <person name="Lei Y."/>
            <person name="Levitsky A.A."/>
            <person name="Li J.H."/>
            <person name="Li Z."/>
            <person name="Liang Y."/>
            <person name="Lin X."/>
            <person name="Liu X."/>
            <person name="Mattei B."/>
            <person name="McIntosh T.C."/>
            <person name="McLeod M.P."/>
            <person name="McPherson D."/>
            <person name="Merkulov G."/>
            <person name="Milshina N.V."/>
            <person name="Mobarry C."/>
            <person name="Morris J."/>
            <person name="Moshrefi A."/>
            <person name="Mount S.M."/>
            <person name="Moy M."/>
            <person name="Murphy B."/>
            <person name="Murphy L."/>
            <person name="Muzny D.M."/>
            <person name="Nelson D.L."/>
            <person name="Nelson D.R."/>
            <person name="Nelson K.A."/>
            <person name="Nixon K."/>
            <person name="Nusskern D.R."/>
            <person name="Pacleb J.M."/>
            <person name="Palazzolo M."/>
            <person name="Pittman G.S."/>
            <person name="Pan S."/>
            <person name="Pollard J."/>
            <person name="Puri V."/>
            <person name="Reese M.G."/>
            <person name="Reinert K."/>
            <person name="Remington K."/>
            <person name="Saunders R.D.C."/>
            <person name="Scheeler F."/>
            <person name="Shen H."/>
            <person name="Shue B.C."/>
            <person name="Siden-Kiamos I."/>
            <person name="Simpson M."/>
            <person name="Skupski M.P."/>
            <person name="Smith T.J."/>
            <person name="Spier E."/>
            <person name="Spradling A.C."/>
            <person name="Stapleton M."/>
            <person name="Strong R."/>
            <person name="Sun E."/>
            <person name="Svirskas R."/>
            <person name="Tector C."/>
            <person name="Turner R."/>
            <person name="Venter E."/>
            <person name="Wang A.H."/>
            <person name="Wang X."/>
            <person name="Wang Z.-Y."/>
            <person name="Wassarman D.A."/>
            <person name="Weinstock G.M."/>
            <person name="Weissenbach J."/>
            <person name="Williams S.M."/>
            <person name="Woodage T."/>
            <person name="Worley K.C."/>
            <person name="Wu D."/>
            <person name="Yang S."/>
            <person name="Yao Q.A."/>
            <person name="Ye J."/>
            <person name="Yeh R.-F."/>
            <person name="Zaveri J.S."/>
            <person name="Zhan M."/>
            <person name="Zhang G."/>
            <person name="Zhao Q."/>
            <person name="Zheng L."/>
            <person name="Zheng X.H."/>
            <person name="Zhong F.N."/>
            <person name="Zhong W."/>
            <person name="Zhou X."/>
            <person name="Zhu S.C."/>
            <person name="Zhu X."/>
            <person name="Smith H.O."/>
            <person name="Gibbs R.A."/>
            <person name="Myers E.W."/>
            <person name="Rubin G.M."/>
            <person name="Venter J.C."/>
        </authorList>
    </citation>
    <scope>NUCLEOTIDE SEQUENCE [LARGE SCALE GENOMIC DNA]</scope>
    <source>
        <strain evidence="2">Berkeley</strain>
    </source>
</reference>
<reference evidence="7 8" key="2">
    <citation type="journal article" date="2002" name="Genome Biol.">
        <title>Annotation of the Drosophila melanogaster euchromatic genome: a systematic review.</title>
        <authorList>
            <person name="Misra S."/>
            <person name="Crosby M.A."/>
            <person name="Mungall C.J."/>
            <person name="Matthews B.B."/>
            <person name="Campbell K.S."/>
            <person name="Hradecky P."/>
            <person name="Huang Y."/>
            <person name="Kaminker J.S."/>
            <person name="Millburn G.H."/>
            <person name="Prochnik S.E."/>
            <person name="Smith C.D."/>
            <person name="Tupy J.L."/>
            <person name="Whitfield E.J."/>
            <person name="Bayraktaroglu L."/>
            <person name="Berman B.P."/>
            <person name="Bettencourt B.R."/>
            <person name="Celniker S.E."/>
            <person name="de Grey A.D.N.J."/>
            <person name="Drysdale R.A."/>
            <person name="Harris N.L."/>
            <person name="Richter J."/>
            <person name="Russo S."/>
            <person name="Schroeder A.J."/>
            <person name="Shu S.Q."/>
            <person name="Stapleton M."/>
            <person name="Yamada C."/>
            <person name="Ashburner M."/>
            <person name="Gelbart W.M."/>
            <person name="Rubin G.M."/>
            <person name="Lewis S.E."/>
        </authorList>
    </citation>
    <scope>GENOME REANNOTATION</scope>
    <source>
        <strain>Berkeley</strain>
    </source>
</reference>
<reference evidence="9" key="3">
    <citation type="journal article" date="2002" name="Genome Biol.">
        <title>A Drosophila full-length cDNA resource.</title>
        <authorList>
            <person name="Stapleton M."/>
            <person name="Carlson J.W."/>
            <person name="Brokstein P."/>
            <person name="Yu C."/>
            <person name="Champe M."/>
            <person name="George R.A."/>
            <person name="Guarin H."/>
            <person name="Kronmiller B."/>
            <person name="Pacleb J.M."/>
            <person name="Park S."/>
            <person name="Wan K.H."/>
            <person name="Rubin G.M."/>
            <person name="Celniker S.E."/>
        </authorList>
    </citation>
    <scope>NUCLEOTIDE SEQUENCE [LARGE SCALE MRNA]</scope>
    <source>
        <strain evidence="9">Berkeley</strain>
        <tissue evidence="4">Head</tissue>
    </source>
</reference>
<reference evidence="7" key="4">
    <citation type="journal article" date="2002" name="J. Biol. Chem.">
        <title>Functional conservation for lipid storage droplet association among Perilipin, ADRP, and TIP47 (PAT)-related proteins in mammals, Drosophila, and Dictyostelium.</title>
        <authorList>
            <person name="Miura S."/>
            <person name="Gan J.-W."/>
            <person name="Brzostowski J."/>
            <person name="Parisi M.J."/>
            <person name="Schultz C.J."/>
            <person name="Londos C."/>
            <person name="Oliver B."/>
            <person name="Kimmel A.R."/>
        </authorList>
    </citation>
    <scope>SUBCELLULAR LOCATION</scope>
</reference>
<reference evidence="7" key="5">
    <citation type="journal article" date="2003" name="Curr. Biol.">
        <title>Control of fat storage by a Drosophila PAT domain protein.</title>
        <authorList>
            <person name="Groenke S."/>
            <person name="Beller M."/>
            <person name="Fellert S."/>
            <person name="Ramakrishnan H."/>
            <person name="Jaeckle H."/>
            <person name="Kuehnlein R.P."/>
        </authorList>
    </citation>
    <scope>FUNCTION</scope>
    <scope>SUBCELLULAR LOCATION</scope>
    <scope>TISSUE SPECIFICITY</scope>
    <scope>DEVELOPMENTAL STAGE</scope>
</reference>
<reference evidence="7" key="6">
    <citation type="journal article" date="2003" name="Mech. Dev.">
        <title>Drosophila Perilipin/ADRP homologue Lsd2 regulates lipid metabolism.</title>
        <authorList>
            <person name="Teixeira L."/>
            <person name="Rabouille C."/>
            <person name="Roerth P."/>
            <person name="Ephrussi A."/>
            <person name="Vanzo N.F."/>
        </authorList>
    </citation>
    <scope>FUNCTION</scope>
    <scope>SUBCELLULAR LOCATION</scope>
    <scope>TISSUE SPECIFICITY</scope>
    <scope>DEVELOPMENTAL STAGE</scope>
</reference>
<gene>
    <name evidence="8" type="primary">Lsd-2</name>
    <name type="ORF">CG9057</name>
</gene>
<feature type="chain" id="PRO_0000099895" description="Lipid storage droplets surface-binding protein 2">
    <location>
        <begin position="1"/>
        <end position="352"/>
    </location>
</feature>
<feature type="region of interest" description="Disordered" evidence="1">
    <location>
        <begin position="1"/>
        <end position="28"/>
    </location>
</feature>
<feature type="region of interest" description="Disordered" evidence="1">
    <location>
        <begin position="298"/>
        <end position="352"/>
    </location>
</feature>
<feature type="compositionally biased region" description="Polar residues" evidence="1">
    <location>
        <begin position="298"/>
        <end position="309"/>
    </location>
</feature>
<feature type="compositionally biased region" description="Low complexity" evidence="1">
    <location>
        <begin position="315"/>
        <end position="329"/>
    </location>
</feature>
<sequence length="352" mass="38229">MASAEQKHATGNGTTGNGTAMNDVDQPKDAKDLLPHLESLERIIKLPVVNAAWDKSQDVYGKVKGKNRVFEWALTAAEDCVTRAVTTAAPFVTKLDRPIAYVDQTLVKGIDKLEVKAPIIKDTPQEIYNQAKSKVIDVVQPHLERVVKFKAAGQQKAASLKDLAWQKANEVLATQYGSLAVNGVDTTTALAERLLEYYFPKCESDVEEDNDDKQNAVVQNGKSSENDMPVPASEDPVLHTVQTVGRLSNKISRRVYRNVSRQIKQVQKGNINDYLSSLIAALKLHQYINFINSSMGTNVEQSGGSSSDACSPFGTTTSTTTTTTTSSTSNNKPVVALPHVAKSKRAPAVSSQ</sequence>
<protein>
    <recommendedName>
        <fullName>Lipid storage droplets surface-binding protein 2</fullName>
        <shortName>Lsd2</shortName>
    </recommendedName>
</protein>